<organism>
    <name type="scientific">Solanum lycopersicum</name>
    <name type="common">Tomato</name>
    <name type="synonym">Lycopersicon esculentum</name>
    <dbReference type="NCBI Taxonomy" id="4081"/>
    <lineage>
        <taxon>Eukaryota</taxon>
        <taxon>Viridiplantae</taxon>
        <taxon>Streptophyta</taxon>
        <taxon>Embryophyta</taxon>
        <taxon>Tracheophyta</taxon>
        <taxon>Spermatophyta</taxon>
        <taxon>Magnoliopsida</taxon>
        <taxon>eudicotyledons</taxon>
        <taxon>Gunneridae</taxon>
        <taxon>Pentapetalae</taxon>
        <taxon>asterids</taxon>
        <taxon>lamiids</taxon>
        <taxon>Solanales</taxon>
        <taxon>Solanaceae</taxon>
        <taxon>Solanoideae</taxon>
        <taxon>Solaneae</taxon>
        <taxon>Solanum</taxon>
        <taxon>Solanum subgen. Lycopersicon</taxon>
    </lineage>
</organism>
<name>CWP06_SOLLC</name>
<reference evidence="3" key="1">
    <citation type="journal article" date="1997" name="J. Biol. Chem.">
        <title>Differential extraction and protein sequencing reveals major differences in patterns of primary cell wall proteins from plants.</title>
        <authorList>
            <person name="Robertson D."/>
            <person name="Mitchell G.P."/>
            <person name="Gilroy J.S."/>
            <person name="Gerrish C."/>
            <person name="Bolwell G.P."/>
            <person name="Slabas A.R."/>
        </authorList>
    </citation>
    <scope>PROTEIN SEQUENCE</scope>
    <scope>SUBCELLULAR LOCATION</scope>
</reference>
<sequence length="13" mass="1381">SNAVAVLNXXEXM</sequence>
<accession>P80803</accession>
<feature type="chain" id="PRO_0000079640" description="21 kDa cell wall protein">
    <location>
        <begin position="1"/>
        <end position="13" status="greater than"/>
    </location>
</feature>
<feature type="non-terminal residue" evidence="2">
    <location>
        <position position="13"/>
    </location>
</feature>
<dbReference type="InParanoid" id="P80803"/>
<dbReference type="Proteomes" id="UP000004994">
    <property type="component" value="Unplaced"/>
</dbReference>
<dbReference type="GO" id="GO:0005576">
    <property type="term" value="C:extracellular region"/>
    <property type="evidence" value="ECO:0007669"/>
    <property type="project" value="UniProtKB-KW"/>
</dbReference>
<evidence type="ECO:0000269" key="1">
    <source>
    </source>
</evidence>
<evidence type="ECO:0000303" key="2">
    <source>
    </source>
</evidence>
<evidence type="ECO:0000305" key="3"/>
<comment type="subcellular location">
    <subcellularLocation>
        <location evidence="1">Secreted</location>
        <location evidence="1">Cell wall</location>
    </subcellularLocation>
</comment>
<keyword id="KW-0134">Cell wall</keyword>
<keyword id="KW-0903">Direct protein sequencing</keyword>
<keyword id="KW-1185">Reference proteome</keyword>
<keyword id="KW-0964">Secreted</keyword>
<protein>
    <recommendedName>
        <fullName>21 kDa cell wall protein</fullName>
    </recommendedName>
</protein>
<proteinExistence type="evidence at protein level"/>